<gene>
    <name type="primary">mcts1-b</name>
</gene>
<organism>
    <name type="scientific">Xenopus laevis</name>
    <name type="common">African clawed frog</name>
    <dbReference type="NCBI Taxonomy" id="8355"/>
    <lineage>
        <taxon>Eukaryota</taxon>
        <taxon>Metazoa</taxon>
        <taxon>Chordata</taxon>
        <taxon>Craniata</taxon>
        <taxon>Vertebrata</taxon>
        <taxon>Euteleostomi</taxon>
        <taxon>Amphibia</taxon>
        <taxon>Batrachia</taxon>
        <taxon>Anura</taxon>
        <taxon>Pipoidea</taxon>
        <taxon>Pipidae</taxon>
        <taxon>Xenopodinae</taxon>
        <taxon>Xenopus</taxon>
        <taxon>Xenopus</taxon>
    </lineage>
</organism>
<reference key="1">
    <citation type="submission" date="2004-05" db="EMBL/GenBank/DDBJ databases">
        <authorList>
            <consortium name="NIH - Xenopus Gene Collection (XGC) project"/>
        </authorList>
    </citation>
    <scope>NUCLEOTIDE SEQUENCE [LARGE SCALE MRNA]</scope>
    <source>
        <tissue>Oocyte</tissue>
    </source>
</reference>
<proteinExistence type="evidence at transcript level"/>
<evidence type="ECO:0000250" key="1"/>
<evidence type="ECO:0000255" key="2">
    <source>
        <dbReference type="PROSITE-ProRule" id="PRU00161"/>
    </source>
</evidence>
<evidence type="ECO:0000305" key="3"/>
<comment type="function">
    <text evidence="1">Plays a role as translation enhancer and involved in cell cycle regulation.</text>
</comment>
<comment type="subcellular location">
    <subcellularLocation>
        <location evidence="1">Cytoplasm</location>
    </subcellularLocation>
</comment>
<comment type="domain">
    <text evidence="1">The PUA RNA-binding domain is critical for cap binding, but not sufficient for translation enhancer function.</text>
</comment>
<comment type="similarity">
    <text evidence="3">Belongs to the MCTS1 family.</text>
</comment>
<accession>Q6NRJ7</accession>
<keyword id="KW-0131">Cell cycle</keyword>
<keyword id="KW-0963">Cytoplasm</keyword>
<keyword id="KW-0341">Growth regulation</keyword>
<keyword id="KW-1185">Reference proteome</keyword>
<keyword id="KW-0804">Transcription</keyword>
<keyword id="KW-0805">Transcription regulation</keyword>
<protein>
    <recommendedName>
        <fullName>Malignant T-cell-amplified sequence 1-B</fullName>
        <shortName>MCT-1B</shortName>
    </recommendedName>
</protein>
<feature type="chain" id="PRO_0000344793" description="Malignant T-cell-amplified sequence 1-B">
    <location>
        <begin position="1"/>
        <end position="181"/>
    </location>
</feature>
<feature type="domain" description="PUA" evidence="2">
    <location>
        <begin position="92"/>
        <end position="171"/>
    </location>
</feature>
<dbReference type="EMBL" id="BC070753">
    <property type="protein sequence ID" value="AAH70753.1"/>
    <property type="molecule type" value="mRNA"/>
</dbReference>
<dbReference type="SMR" id="Q6NRJ7"/>
<dbReference type="DNASU" id="431866"/>
<dbReference type="GeneID" id="431866"/>
<dbReference type="KEGG" id="xla:431866"/>
<dbReference type="AGR" id="Xenbase:XB-GENE-6251762"/>
<dbReference type="CTD" id="431866"/>
<dbReference type="Xenbase" id="XB-GENE-6251762">
    <property type="gene designation" value="mcts1.L"/>
</dbReference>
<dbReference type="OMA" id="PNIMQRF"/>
<dbReference type="OrthoDB" id="10249667at2759"/>
<dbReference type="Proteomes" id="UP000186698">
    <property type="component" value="Chromosome 8L"/>
</dbReference>
<dbReference type="Bgee" id="431866">
    <property type="expression patterns" value="Expressed in oocyte and 19 other cell types or tissues"/>
</dbReference>
<dbReference type="GO" id="GO:0005737">
    <property type="term" value="C:cytoplasm"/>
    <property type="evidence" value="ECO:0007669"/>
    <property type="project" value="UniProtKB-SubCell"/>
</dbReference>
<dbReference type="GO" id="GO:0003723">
    <property type="term" value="F:RNA binding"/>
    <property type="evidence" value="ECO:0007669"/>
    <property type="project" value="InterPro"/>
</dbReference>
<dbReference type="GO" id="GO:0001731">
    <property type="term" value="P:formation of translation preinitiation complex"/>
    <property type="evidence" value="ECO:0000318"/>
    <property type="project" value="GO_Central"/>
</dbReference>
<dbReference type="CDD" id="cd11609">
    <property type="entry name" value="MCT1_N"/>
    <property type="match status" value="1"/>
</dbReference>
<dbReference type="CDD" id="cd21155">
    <property type="entry name" value="PUA_MCTS-1-like"/>
    <property type="match status" value="1"/>
</dbReference>
<dbReference type="FunFam" id="3.10.400.20:FF:000001">
    <property type="entry name" value="Malignant T-cell-amplified sequence 1"/>
    <property type="match status" value="1"/>
</dbReference>
<dbReference type="Gene3D" id="3.10.400.20">
    <property type="match status" value="1"/>
</dbReference>
<dbReference type="InterPro" id="IPR016437">
    <property type="entry name" value="MCT-1/Tma20"/>
</dbReference>
<dbReference type="InterPro" id="IPR041366">
    <property type="entry name" value="Pre-PUA"/>
</dbReference>
<dbReference type="InterPro" id="IPR002478">
    <property type="entry name" value="PUA"/>
</dbReference>
<dbReference type="InterPro" id="IPR015947">
    <property type="entry name" value="PUA-like_sf"/>
</dbReference>
<dbReference type="InterPro" id="IPR004521">
    <property type="entry name" value="Uncharacterised_CHP00451"/>
</dbReference>
<dbReference type="NCBIfam" id="TIGR00451">
    <property type="entry name" value="unchar_dom_2"/>
    <property type="match status" value="1"/>
</dbReference>
<dbReference type="PANTHER" id="PTHR22798:SF0">
    <property type="entry name" value="MALIGNANT T-CELL-AMPLIFIED SEQUENCE 1"/>
    <property type="match status" value="1"/>
</dbReference>
<dbReference type="PANTHER" id="PTHR22798">
    <property type="entry name" value="MCT-1 PROTEIN"/>
    <property type="match status" value="1"/>
</dbReference>
<dbReference type="Pfam" id="PF17832">
    <property type="entry name" value="Pre-PUA"/>
    <property type="match status" value="1"/>
</dbReference>
<dbReference type="Pfam" id="PF01472">
    <property type="entry name" value="PUA"/>
    <property type="match status" value="1"/>
</dbReference>
<dbReference type="PIRSF" id="PIRSF005067">
    <property type="entry name" value="Tma_RNA-bind_prd"/>
    <property type="match status" value="1"/>
</dbReference>
<dbReference type="SMART" id="SM00359">
    <property type="entry name" value="PUA"/>
    <property type="match status" value="1"/>
</dbReference>
<dbReference type="SUPFAM" id="SSF88697">
    <property type="entry name" value="PUA domain-like"/>
    <property type="match status" value="1"/>
</dbReference>
<dbReference type="PROSITE" id="PS50890">
    <property type="entry name" value="PUA"/>
    <property type="match status" value="1"/>
</dbReference>
<sequence length="181" mass="20548">MFKKFDDKENVSNCIQLKTSVIKGIKNQLIDQFPVIEQWLNQIMPKKDPVKIVRCHEHIEILTVNGELLFFRQREGSFYPTLRLLHKYPFILPHQQVDKGAIKFVLSGANIMCPGLTSPGAKLYPAAAETVVAIMAEGKQHALCVGVMKMSADDIEKVNKGIGIENIHYLNDGLWHMKTYK</sequence>
<name>MCS1B_XENLA</name>